<name>CH602_MOOTA</name>
<comment type="function">
    <text evidence="1">Together with its co-chaperonin GroES, plays an essential role in assisting protein folding. The GroEL-GroES system forms a nano-cage that allows encapsulation of the non-native substrate proteins and provides a physical environment optimized to promote and accelerate protein folding.</text>
</comment>
<comment type="catalytic activity">
    <reaction evidence="1">
        <text>ATP + H2O + a folded polypeptide = ADP + phosphate + an unfolded polypeptide.</text>
        <dbReference type="EC" id="5.6.1.7"/>
    </reaction>
</comment>
<comment type="subunit">
    <text evidence="1">Forms a cylinder of 14 subunits composed of two heptameric rings stacked back-to-back. Interacts with the co-chaperonin GroES.</text>
</comment>
<comment type="subcellular location">
    <subcellularLocation>
        <location evidence="1">Cytoplasm</location>
    </subcellularLocation>
</comment>
<comment type="similarity">
    <text evidence="1">Belongs to the chaperonin (HSP60) family.</text>
</comment>
<reference key="1">
    <citation type="journal article" date="2008" name="Environ. Microbiol.">
        <title>The complete genome sequence of Moorella thermoacetica (f. Clostridium thermoaceticum).</title>
        <authorList>
            <person name="Pierce E."/>
            <person name="Xie G."/>
            <person name="Barabote R.D."/>
            <person name="Saunders E."/>
            <person name="Han C.S."/>
            <person name="Detter J.C."/>
            <person name="Richardson P."/>
            <person name="Brettin T.S."/>
            <person name="Das A."/>
            <person name="Ljungdahl L.G."/>
            <person name="Ragsdale S.W."/>
        </authorList>
    </citation>
    <scope>NUCLEOTIDE SEQUENCE [LARGE SCALE GENOMIC DNA]</scope>
    <source>
        <strain>ATCC 39073 / JCM 9320</strain>
    </source>
</reference>
<sequence length="536" mass="57295">MAKQVVFDREAREALEKGITKLTEAVRVTLGPRGRNVVLEKKFGAPTITNDGVTIAKEVELEDPLENVGALLVREVASKTNDVAGDGTTTACVLAQAIVREGMKNVAAGANPMFMKRGIEKAVAAVVENLKAQARPVETKDSISQVASISANDPQIGALVADAMEKVGKDGVITVEESKGMETAVDVVEGMQFDRGYISPYMVTDNERMEAVLEEPYILITDKKITAVADLVPVLERVVRTGKPLLIICEDMEGEALATLVVNKIRGTFTCVAVKAPAFGDRRKAMLQDIAILTGGQVITEEAGLKLENTTLDMLGQARQVRVGKEETTIVEGRGKEEAIEARIAQIRREYEESTSDYDREKLQERLAKLAGGVAVIKVGAATETEMKEKKMRIEDALAATRAAVEEGIVPGGGTALVRAQTALDGVQAQGDELTGVRLVYRALEEPMRQIAANAGVDGSVVVEKVRQSGDSMGFNAATREYVNLFEAGIVDPLKVTRSALENAASIASLVLTTESLIADIPEEEPPVPGGGMPPM</sequence>
<accession>Q2RGL8</accession>
<dbReference type="EC" id="5.6.1.7" evidence="1"/>
<dbReference type="EMBL" id="CP000232">
    <property type="protein sequence ID" value="ABC20421.1"/>
    <property type="molecule type" value="Genomic_DNA"/>
</dbReference>
<dbReference type="RefSeq" id="YP_430964.1">
    <property type="nucleotide sequence ID" value="NC_007644.1"/>
</dbReference>
<dbReference type="SMR" id="Q2RGL8"/>
<dbReference type="STRING" id="264732.Moth_2129"/>
<dbReference type="EnsemblBacteria" id="ABC20421">
    <property type="protein sequence ID" value="ABC20421"/>
    <property type="gene ID" value="Moth_2129"/>
</dbReference>
<dbReference type="KEGG" id="mta:Moth_2129"/>
<dbReference type="PATRIC" id="fig|264732.11.peg.2314"/>
<dbReference type="eggNOG" id="COG0459">
    <property type="taxonomic scope" value="Bacteria"/>
</dbReference>
<dbReference type="HOGENOM" id="CLU_016503_3_0_9"/>
<dbReference type="OrthoDB" id="9766614at2"/>
<dbReference type="GO" id="GO:0005737">
    <property type="term" value="C:cytoplasm"/>
    <property type="evidence" value="ECO:0007669"/>
    <property type="project" value="UniProtKB-SubCell"/>
</dbReference>
<dbReference type="GO" id="GO:0005524">
    <property type="term" value="F:ATP binding"/>
    <property type="evidence" value="ECO:0007669"/>
    <property type="project" value="UniProtKB-UniRule"/>
</dbReference>
<dbReference type="GO" id="GO:0140662">
    <property type="term" value="F:ATP-dependent protein folding chaperone"/>
    <property type="evidence" value="ECO:0007669"/>
    <property type="project" value="InterPro"/>
</dbReference>
<dbReference type="GO" id="GO:0016853">
    <property type="term" value="F:isomerase activity"/>
    <property type="evidence" value="ECO:0007669"/>
    <property type="project" value="UniProtKB-KW"/>
</dbReference>
<dbReference type="GO" id="GO:0051082">
    <property type="term" value="F:unfolded protein binding"/>
    <property type="evidence" value="ECO:0007669"/>
    <property type="project" value="UniProtKB-UniRule"/>
</dbReference>
<dbReference type="GO" id="GO:0042026">
    <property type="term" value="P:protein refolding"/>
    <property type="evidence" value="ECO:0007669"/>
    <property type="project" value="UniProtKB-UniRule"/>
</dbReference>
<dbReference type="CDD" id="cd03344">
    <property type="entry name" value="GroEL"/>
    <property type="match status" value="1"/>
</dbReference>
<dbReference type="FunFam" id="3.50.7.10:FF:000001">
    <property type="entry name" value="60 kDa chaperonin"/>
    <property type="match status" value="1"/>
</dbReference>
<dbReference type="Gene3D" id="3.50.7.10">
    <property type="entry name" value="GroEL"/>
    <property type="match status" value="1"/>
</dbReference>
<dbReference type="Gene3D" id="1.10.560.10">
    <property type="entry name" value="GroEL-like equatorial domain"/>
    <property type="match status" value="1"/>
</dbReference>
<dbReference type="Gene3D" id="3.30.260.10">
    <property type="entry name" value="TCP-1-like chaperonin intermediate domain"/>
    <property type="match status" value="1"/>
</dbReference>
<dbReference type="HAMAP" id="MF_00600">
    <property type="entry name" value="CH60"/>
    <property type="match status" value="1"/>
</dbReference>
<dbReference type="InterPro" id="IPR018370">
    <property type="entry name" value="Chaperonin_Cpn60_CS"/>
</dbReference>
<dbReference type="InterPro" id="IPR001844">
    <property type="entry name" value="Cpn60/GroEL"/>
</dbReference>
<dbReference type="InterPro" id="IPR002423">
    <property type="entry name" value="Cpn60/GroEL/TCP-1"/>
</dbReference>
<dbReference type="InterPro" id="IPR027409">
    <property type="entry name" value="GroEL-like_apical_dom_sf"/>
</dbReference>
<dbReference type="InterPro" id="IPR027413">
    <property type="entry name" value="GROEL-like_equatorial_sf"/>
</dbReference>
<dbReference type="InterPro" id="IPR027410">
    <property type="entry name" value="TCP-1-like_intermed_sf"/>
</dbReference>
<dbReference type="NCBIfam" id="TIGR02348">
    <property type="entry name" value="GroEL"/>
    <property type="match status" value="1"/>
</dbReference>
<dbReference type="NCBIfam" id="NF000592">
    <property type="entry name" value="PRK00013.1"/>
    <property type="match status" value="1"/>
</dbReference>
<dbReference type="NCBIfam" id="NF009487">
    <property type="entry name" value="PRK12849.1"/>
    <property type="match status" value="1"/>
</dbReference>
<dbReference type="NCBIfam" id="NF009488">
    <property type="entry name" value="PRK12850.1"/>
    <property type="match status" value="1"/>
</dbReference>
<dbReference type="NCBIfam" id="NF009489">
    <property type="entry name" value="PRK12851.1"/>
    <property type="match status" value="1"/>
</dbReference>
<dbReference type="PANTHER" id="PTHR45633">
    <property type="entry name" value="60 KDA HEAT SHOCK PROTEIN, MITOCHONDRIAL"/>
    <property type="match status" value="1"/>
</dbReference>
<dbReference type="Pfam" id="PF00118">
    <property type="entry name" value="Cpn60_TCP1"/>
    <property type="match status" value="1"/>
</dbReference>
<dbReference type="PRINTS" id="PR00298">
    <property type="entry name" value="CHAPERONIN60"/>
</dbReference>
<dbReference type="SUPFAM" id="SSF52029">
    <property type="entry name" value="GroEL apical domain-like"/>
    <property type="match status" value="1"/>
</dbReference>
<dbReference type="SUPFAM" id="SSF48592">
    <property type="entry name" value="GroEL equatorial domain-like"/>
    <property type="match status" value="1"/>
</dbReference>
<dbReference type="SUPFAM" id="SSF54849">
    <property type="entry name" value="GroEL-intermediate domain like"/>
    <property type="match status" value="1"/>
</dbReference>
<dbReference type="PROSITE" id="PS00296">
    <property type="entry name" value="CHAPERONINS_CPN60"/>
    <property type="match status" value="1"/>
</dbReference>
<proteinExistence type="inferred from homology"/>
<evidence type="ECO:0000255" key="1">
    <source>
        <dbReference type="HAMAP-Rule" id="MF_00600"/>
    </source>
</evidence>
<keyword id="KW-0067">ATP-binding</keyword>
<keyword id="KW-0143">Chaperone</keyword>
<keyword id="KW-0963">Cytoplasm</keyword>
<keyword id="KW-0413">Isomerase</keyword>
<keyword id="KW-0547">Nucleotide-binding</keyword>
<gene>
    <name evidence="1" type="primary">groEL2</name>
    <name evidence="1" type="synonym">groL2</name>
    <name type="ordered locus">Moth_2129</name>
</gene>
<protein>
    <recommendedName>
        <fullName evidence="1">Chaperonin GroEL 2</fullName>
        <ecNumber evidence="1">5.6.1.7</ecNumber>
    </recommendedName>
    <alternativeName>
        <fullName evidence="1">60 kDa chaperonin 2</fullName>
    </alternativeName>
    <alternativeName>
        <fullName evidence="1">Chaperonin-60 2</fullName>
        <shortName evidence="1">Cpn60 2</shortName>
    </alternativeName>
</protein>
<organism>
    <name type="scientific">Moorella thermoacetica (strain ATCC 39073 / JCM 9320)</name>
    <dbReference type="NCBI Taxonomy" id="264732"/>
    <lineage>
        <taxon>Bacteria</taxon>
        <taxon>Bacillati</taxon>
        <taxon>Bacillota</taxon>
        <taxon>Clostridia</taxon>
        <taxon>Moorellales</taxon>
        <taxon>Moorellaceae</taxon>
        <taxon>Moorella</taxon>
    </lineage>
</organism>
<feature type="chain" id="PRO_0000256929" description="Chaperonin GroEL 2">
    <location>
        <begin position="1"/>
        <end position="536"/>
    </location>
</feature>
<feature type="binding site" evidence="1">
    <location>
        <begin position="29"/>
        <end position="32"/>
    </location>
    <ligand>
        <name>ATP</name>
        <dbReference type="ChEBI" id="CHEBI:30616"/>
    </ligand>
</feature>
<feature type="binding site" evidence="1">
    <location>
        <begin position="86"/>
        <end position="90"/>
    </location>
    <ligand>
        <name>ATP</name>
        <dbReference type="ChEBI" id="CHEBI:30616"/>
    </ligand>
</feature>
<feature type="binding site" evidence="1">
    <location>
        <position position="413"/>
    </location>
    <ligand>
        <name>ATP</name>
        <dbReference type="ChEBI" id="CHEBI:30616"/>
    </ligand>
</feature>
<feature type="binding site" evidence="1">
    <location>
        <begin position="476"/>
        <end position="478"/>
    </location>
    <ligand>
        <name>ATP</name>
        <dbReference type="ChEBI" id="CHEBI:30616"/>
    </ligand>
</feature>
<feature type="binding site" evidence="1">
    <location>
        <position position="492"/>
    </location>
    <ligand>
        <name>ATP</name>
        <dbReference type="ChEBI" id="CHEBI:30616"/>
    </ligand>
</feature>